<comment type="function">
    <text evidence="2 3">Member of the two-component regulatory system GlnL/GlnK that positively regulates the expression of the glsA-glnT operon in response to glutamine. GlnL binds the promoter region of glsA-glnT in vitro.</text>
</comment>
<comment type="subcellular location">
    <subcellularLocation>
        <location evidence="4">Cytoplasm</location>
    </subcellularLocation>
</comment>
<comment type="PTM">
    <text evidence="4">Phosphorylated by GlnK.</text>
</comment>
<comment type="miscellaneous">
    <text>Disruption of glnL by Tn917 insertion leads to protonophore-resistance.</text>
</comment>
<feature type="chain" id="PRO_0000081104" description="Transcriptional regulatory protein GlnL">
    <location>
        <begin position="1"/>
        <end position="314"/>
    </location>
</feature>
<feature type="domain" description="Response regulatory" evidence="1">
    <location>
        <begin position="2"/>
        <end position="118"/>
    </location>
</feature>
<feature type="modified residue" description="4-aspartylphosphate" evidence="1">
    <location>
        <position position="54"/>
    </location>
</feature>
<evidence type="ECO:0000255" key="1">
    <source>
        <dbReference type="PROSITE-ProRule" id="PRU00169"/>
    </source>
</evidence>
<evidence type="ECO:0000269" key="2">
    <source>
    </source>
</evidence>
<evidence type="ECO:0000269" key="3">
    <source>
    </source>
</evidence>
<evidence type="ECO:0000305" key="4"/>
<proteinExistence type="inferred from homology"/>
<accession>P40759</accession>
<dbReference type="EMBL" id="L22503">
    <property type="protein sequence ID" value="AAA64347.1"/>
    <property type="molecule type" value="Genomic_DNA"/>
</dbReference>
<dbReference type="EMBL" id="D30808">
    <property type="protein sequence ID" value="BAA06466.1"/>
    <property type="molecule type" value="Genomic_DNA"/>
</dbReference>
<dbReference type="EMBL" id="AL009126">
    <property type="protein sequence ID" value="CAB12039.1"/>
    <property type="molecule type" value="Genomic_DNA"/>
</dbReference>
<dbReference type="PIR" id="I39924">
    <property type="entry name" value="I39924"/>
</dbReference>
<dbReference type="RefSeq" id="NP_388127.1">
    <property type="nucleotide sequence ID" value="NC_000964.3"/>
</dbReference>
<dbReference type="RefSeq" id="WP_003234824.1">
    <property type="nucleotide sequence ID" value="NZ_OZ025638.1"/>
</dbReference>
<dbReference type="SMR" id="P40759"/>
<dbReference type="FunCoup" id="P40759">
    <property type="interactions" value="296"/>
</dbReference>
<dbReference type="STRING" id="224308.BSU02450"/>
<dbReference type="PaxDb" id="224308-BSU02450"/>
<dbReference type="EnsemblBacteria" id="CAB12039">
    <property type="protein sequence ID" value="CAB12039"/>
    <property type="gene ID" value="BSU_02450"/>
</dbReference>
<dbReference type="GeneID" id="938414"/>
<dbReference type="KEGG" id="bsu:BSU02450"/>
<dbReference type="PATRIC" id="fig|224308.179.peg.252"/>
<dbReference type="eggNOG" id="COG0784">
    <property type="taxonomic scope" value="Bacteria"/>
</dbReference>
<dbReference type="InParanoid" id="P40759"/>
<dbReference type="OrthoDB" id="1684633at2"/>
<dbReference type="BioCyc" id="BSUB:BSU02450-MONOMER"/>
<dbReference type="Proteomes" id="UP000001570">
    <property type="component" value="Chromosome"/>
</dbReference>
<dbReference type="GO" id="GO:0005737">
    <property type="term" value="C:cytoplasm"/>
    <property type="evidence" value="ECO:0007669"/>
    <property type="project" value="UniProtKB-SubCell"/>
</dbReference>
<dbReference type="GO" id="GO:0003677">
    <property type="term" value="F:DNA binding"/>
    <property type="evidence" value="ECO:0007669"/>
    <property type="project" value="UniProtKB-KW"/>
</dbReference>
<dbReference type="GO" id="GO:0000160">
    <property type="term" value="P:phosphorelay signal transduction system"/>
    <property type="evidence" value="ECO:0007669"/>
    <property type="project" value="UniProtKB-KW"/>
</dbReference>
<dbReference type="CDD" id="cd17565">
    <property type="entry name" value="REC_GlnL-like"/>
    <property type="match status" value="1"/>
</dbReference>
<dbReference type="Gene3D" id="3.40.50.2300">
    <property type="match status" value="1"/>
</dbReference>
<dbReference type="InterPro" id="IPR011006">
    <property type="entry name" value="CheY-like_superfamily"/>
</dbReference>
<dbReference type="InterPro" id="IPR001789">
    <property type="entry name" value="Sig_transdc_resp-reg_receiver"/>
</dbReference>
<dbReference type="InterPro" id="IPR052048">
    <property type="entry name" value="ST_Response_Regulator"/>
</dbReference>
<dbReference type="InterPro" id="IPR013972">
    <property type="entry name" value="YcbB"/>
</dbReference>
<dbReference type="PANTHER" id="PTHR43228:SF8">
    <property type="entry name" value="TRANSCRIPTIONAL REGULATORY PROTEIN GLNL"/>
    <property type="match status" value="1"/>
</dbReference>
<dbReference type="PANTHER" id="PTHR43228">
    <property type="entry name" value="TWO-COMPONENT RESPONSE REGULATOR"/>
    <property type="match status" value="1"/>
</dbReference>
<dbReference type="Pfam" id="PF00072">
    <property type="entry name" value="Response_reg"/>
    <property type="match status" value="1"/>
</dbReference>
<dbReference type="Pfam" id="PF08664">
    <property type="entry name" value="YcbB"/>
    <property type="match status" value="1"/>
</dbReference>
<dbReference type="SMART" id="SM00448">
    <property type="entry name" value="REC"/>
    <property type="match status" value="1"/>
</dbReference>
<dbReference type="SUPFAM" id="SSF52172">
    <property type="entry name" value="CheY-like"/>
    <property type="match status" value="1"/>
</dbReference>
<dbReference type="PROSITE" id="PS50110">
    <property type="entry name" value="RESPONSE_REGULATORY"/>
    <property type="match status" value="1"/>
</dbReference>
<organism>
    <name type="scientific">Bacillus subtilis (strain 168)</name>
    <dbReference type="NCBI Taxonomy" id="224308"/>
    <lineage>
        <taxon>Bacteria</taxon>
        <taxon>Bacillati</taxon>
        <taxon>Bacillota</taxon>
        <taxon>Bacilli</taxon>
        <taxon>Bacillales</taxon>
        <taxon>Bacillaceae</taxon>
        <taxon>Bacillus</taxon>
    </lineage>
</organism>
<sequence>MRFFIADDDRAVRSILRQIIEDEDLGEAAGEADDGSQVEGHMLQFKQIDILLIDLLMPGRDGIETIRQIQNTYSGKIVMISQVEAKEMVGEAYSLGIEYFIHKPINRIEIVTVLQKVKERIELEHSIGAIQHSLSRLVNRTERKARPQQKSDSGLKEAGTFLLSELGMMGEGGAHDLMAVLQYLAEHEQSEPHEKQSPSLKQIFTQVAVRKLGTGASQTEVNREMKASEQRIRRAIIHSLHHFASLGTTDFSNPKFETYASKFFDFPVVSQKMKELQSKDAKPLAPARINMKKFIHVFFLEAKLLHETMKQRRI</sequence>
<reference key="1">
    <citation type="journal article" date="1994" name="Biochim. Biophys. Acta">
        <title>Isolation of Tn917 insertional mutants of Bacillus subtilis that are resistant to the protonophore carbonyl cyanide m-chlorophenylhydrazone.</title>
        <authorList>
            <person name="Quirk P.G."/>
            <person name="Guffanti A.A."/>
            <person name="Clejan S."/>
            <person name="Cheng J."/>
            <person name="Krulwich T.A."/>
        </authorList>
    </citation>
    <scope>NUCLEOTIDE SEQUENCE [GENOMIC DNA]</scope>
    <source>
        <strain>BD99</strain>
    </source>
</reference>
<reference key="2">
    <citation type="journal article" date="1995" name="Microbiology">
        <title>Determination of a 21548 bp nucleotide sequence around the 24 degrees region of the Bacillus subtilis chromosome.</title>
        <authorList>
            <person name="Ogawa K."/>
            <person name="Akagawa E."/>
            <person name="Nakamura K."/>
            <person name="Yamane K."/>
        </authorList>
    </citation>
    <scope>NUCLEOTIDE SEQUENCE [GENOMIC DNA]</scope>
    <source>
        <strain>168</strain>
    </source>
</reference>
<reference key="3">
    <citation type="journal article" date="1997" name="Nature">
        <title>The complete genome sequence of the Gram-positive bacterium Bacillus subtilis.</title>
        <authorList>
            <person name="Kunst F."/>
            <person name="Ogasawara N."/>
            <person name="Moszer I."/>
            <person name="Albertini A.M."/>
            <person name="Alloni G."/>
            <person name="Azevedo V."/>
            <person name="Bertero M.G."/>
            <person name="Bessieres P."/>
            <person name="Bolotin A."/>
            <person name="Borchert S."/>
            <person name="Borriss R."/>
            <person name="Boursier L."/>
            <person name="Brans A."/>
            <person name="Braun M."/>
            <person name="Brignell S.C."/>
            <person name="Bron S."/>
            <person name="Brouillet S."/>
            <person name="Bruschi C.V."/>
            <person name="Caldwell B."/>
            <person name="Capuano V."/>
            <person name="Carter N.M."/>
            <person name="Choi S.-K."/>
            <person name="Codani J.-J."/>
            <person name="Connerton I.F."/>
            <person name="Cummings N.J."/>
            <person name="Daniel R.A."/>
            <person name="Denizot F."/>
            <person name="Devine K.M."/>
            <person name="Duesterhoeft A."/>
            <person name="Ehrlich S.D."/>
            <person name="Emmerson P.T."/>
            <person name="Entian K.-D."/>
            <person name="Errington J."/>
            <person name="Fabret C."/>
            <person name="Ferrari E."/>
            <person name="Foulger D."/>
            <person name="Fritz C."/>
            <person name="Fujita M."/>
            <person name="Fujita Y."/>
            <person name="Fuma S."/>
            <person name="Galizzi A."/>
            <person name="Galleron N."/>
            <person name="Ghim S.-Y."/>
            <person name="Glaser P."/>
            <person name="Goffeau A."/>
            <person name="Golightly E.J."/>
            <person name="Grandi G."/>
            <person name="Guiseppi G."/>
            <person name="Guy B.J."/>
            <person name="Haga K."/>
            <person name="Haiech J."/>
            <person name="Harwood C.R."/>
            <person name="Henaut A."/>
            <person name="Hilbert H."/>
            <person name="Holsappel S."/>
            <person name="Hosono S."/>
            <person name="Hullo M.-F."/>
            <person name="Itaya M."/>
            <person name="Jones L.-M."/>
            <person name="Joris B."/>
            <person name="Karamata D."/>
            <person name="Kasahara Y."/>
            <person name="Klaerr-Blanchard M."/>
            <person name="Klein C."/>
            <person name="Kobayashi Y."/>
            <person name="Koetter P."/>
            <person name="Koningstein G."/>
            <person name="Krogh S."/>
            <person name="Kumano M."/>
            <person name="Kurita K."/>
            <person name="Lapidus A."/>
            <person name="Lardinois S."/>
            <person name="Lauber J."/>
            <person name="Lazarevic V."/>
            <person name="Lee S.-M."/>
            <person name="Levine A."/>
            <person name="Liu H."/>
            <person name="Masuda S."/>
            <person name="Mauel C."/>
            <person name="Medigue C."/>
            <person name="Medina N."/>
            <person name="Mellado R.P."/>
            <person name="Mizuno M."/>
            <person name="Moestl D."/>
            <person name="Nakai S."/>
            <person name="Noback M."/>
            <person name="Noone D."/>
            <person name="O'Reilly M."/>
            <person name="Ogawa K."/>
            <person name="Ogiwara A."/>
            <person name="Oudega B."/>
            <person name="Park S.-H."/>
            <person name="Parro V."/>
            <person name="Pohl T.M."/>
            <person name="Portetelle D."/>
            <person name="Porwollik S."/>
            <person name="Prescott A.M."/>
            <person name="Presecan E."/>
            <person name="Pujic P."/>
            <person name="Purnelle B."/>
            <person name="Rapoport G."/>
            <person name="Rey M."/>
            <person name="Reynolds S."/>
            <person name="Rieger M."/>
            <person name="Rivolta C."/>
            <person name="Rocha E."/>
            <person name="Roche B."/>
            <person name="Rose M."/>
            <person name="Sadaie Y."/>
            <person name="Sato T."/>
            <person name="Scanlan E."/>
            <person name="Schleich S."/>
            <person name="Schroeter R."/>
            <person name="Scoffone F."/>
            <person name="Sekiguchi J."/>
            <person name="Sekowska A."/>
            <person name="Seror S.J."/>
            <person name="Serror P."/>
            <person name="Shin B.-S."/>
            <person name="Soldo B."/>
            <person name="Sorokin A."/>
            <person name="Tacconi E."/>
            <person name="Takagi T."/>
            <person name="Takahashi H."/>
            <person name="Takemaru K."/>
            <person name="Takeuchi M."/>
            <person name="Tamakoshi A."/>
            <person name="Tanaka T."/>
            <person name="Terpstra P."/>
            <person name="Tognoni A."/>
            <person name="Tosato V."/>
            <person name="Uchiyama S."/>
            <person name="Vandenbol M."/>
            <person name="Vannier F."/>
            <person name="Vassarotti A."/>
            <person name="Viari A."/>
            <person name="Wambutt R."/>
            <person name="Wedler E."/>
            <person name="Wedler H."/>
            <person name="Weitzenegger T."/>
            <person name="Winters P."/>
            <person name="Wipat A."/>
            <person name="Yamamoto H."/>
            <person name="Yamane K."/>
            <person name="Yasumoto K."/>
            <person name="Yata K."/>
            <person name="Yoshida K."/>
            <person name="Yoshikawa H.-F."/>
            <person name="Zumstein E."/>
            <person name="Yoshikawa H."/>
            <person name="Danchin A."/>
        </authorList>
    </citation>
    <scope>NUCLEOTIDE SEQUENCE [LARGE SCALE GENOMIC DNA]</scope>
    <source>
        <strain>168</strain>
    </source>
</reference>
<reference key="4">
    <citation type="journal article" date="2001" name="J. Bacteriol.">
        <title>Comprehensive DNA microarray analysis of Bacillus subtilis two-component regulatory systems.</title>
        <authorList>
            <person name="Kobayashi K."/>
            <person name="Ogura M."/>
            <person name="Yamaguchi H."/>
            <person name="Yoshida K."/>
            <person name="Ogasawara N."/>
            <person name="Tanaka T."/>
            <person name="Fujita Y."/>
        </authorList>
    </citation>
    <scope>FUNCTION</scope>
</reference>
<reference key="5">
    <citation type="journal article" date="2005" name="J. Bacteriol.">
        <title>Enhancement of glutamine utilization in Bacillus subtilis through the GlnK-GlnL two-component regulatory system.</title>
        <authorList>
            <person name="Satomura T."/>
            <person name="Shimura D."/>
            <person name="Asai K."/>
            <person name="Sadaie Y."/>
            <person name="Hirooka K."/>
            <person name="Fujita Y."/>
        </authorList>
    </citation>
    <scope>FUNCTION</scope>
    <scope>GENE NAME</scope>
    <source>
        <strain>168</strain>
    </source>
</reference>
<protein>
    <recommendedName>
        <fullName>Transcriptional regulatory protein GlnL</fullName>
    </recommendedName>
</protein>
<name>GLNL_BACSU</name>
<keyword id="KW-0963">Cytoplasm</keyword>
<keyword id="KW-0238">DNA-binding</keyword>
<keyword id="KW-0597">Phosphoprotein</keyword>
<keyword id="KW-1185">Reference proteome</keyword>
<keyword id="KW-0804">Transcription</keyword>
<keyword id="KW-0805">Transcription regulation</keyword>
<keyword id="KW-0902">Two-component regulatory system</keyword>
<gene>
    <name type="primary">glnL</name>
    <name type="synonym">ycbB</name>
    <name type="synonym">yzgB</name>
    <name type="ordered locus">BSU02450</name>
</gene>